<proteinExistence type="inferred from homology"/>
<reference key="1">
    <citation type="journal article" date="2009" name="PLoS Genet.">
        <title>Organised genome dynamics in the Escherichia coli species results in highly diverse adaptive paths.</title>
        <authorList>
            <person name="Touchon M."/>
            <person name="Hoede C."/>
            <person name="Tenaillon O."/>
            <person name="Barbe V."/>
            <person name="Baeriswyl S."/>
            <person name="Bidet P."/>
            <person name="Bingen E."/>
            <person name="Bonacorsi S."/>
            <person name="Bouchier C."/>
            <person name="Bouvet O."/>
            <person name="Calteau A."/>
            <person name="Chiapello H."/>
            <person name="Clermont O."/>
            <person name="Cruveiller S."/>
            <person name="Danchin A."/>
            <person name="Diard M."/>
            <person name="Dossat C."/>
            <person name="Karoui M.E."/>
            <person name="Frapy E."/>
            <person name="Garry L."/>
            <person name="Ghigo J.M."/>
            <person name="Gilles A.M."/>
            <person name="Johnson J."/>
            <person name="Le Bouguenec C."/>
            <person name="Lescat M."/>
            <person name="Mangenot S."/>
            <person name="Martinez-Jehanne V."/>
            <person name="Matic I."/>
            <person name="Nassif X."/>
            <person name="Oztas S."/>
            <person name="Petit M.A."/>
            <person name="Pichon C."/>
            <person name="Rouy Z."/>
            <person name="Ruf C.S."/>
            <person name="Schneider D."/>
            <person name="Tourret J."/>
            <person name="Vacherie B."/>
            <person name="Vallenet D."/>
            <person name="Medigue C."/>
            <person name="Rocha E.P.C."/>
            <person name="Denamur E."/>
        </authorList>
    </citation>
    <scope>NUCLEOTIDE SEQUENCE [LARGE SCALE GENOMIC DNA]</scope>
    <source>
        <strain>ED1a</strain>
    </source>
</reference>
<sequence length="454" mass="49197">MSDNDTIVAQATPPGRGGVGILRISGLKAREVAETVLGKLPKPRYADYLPFKDADGSVLDQGIALWFPGPNSFTGEDVLELQGHGGPVILDLLLKRILTIPGLRIARPGEFSERAFLNDKLDLAQAEAIADLIDASSEQAARSALNSLQGAFSARVNHLVEALTHLRIYVEAAIDFPDEEIDFLSDGKIEAQLNDVIADLDAVRAEARQGSLLREGMKVVIAGRPNAGKSSLLNALAGREAAIVTDIAGTTRDVLREHIHIDGMPLHIIDTAGLREASDEVERIGIERAWQEIEQADRVLFMVDGTTTDAVDPAEIWPEFIARLPAKLPITVVRNKADITGETLGMSEVNGHALIRLSARTGEGVDVLRNHLKQSMGFDTNMEGGFLARRRHLQALEQAAEHLQQGKAQLLGAWAGELLAEELRLAQQNLSEITGEFTSDDLLGRIFSSFCIGK</sequence>
<protein>
    <recommendedName>
        <fullName evidence="1">tRNA modification GTPase MnmE</fullName>
        <ecNumber evidence="1">3.6.-.-</ecNumber>
    </recommendedName>
</protein>
<keyword id="KW-0963">Cytoplasm</keyword>
<keyword id="KW-0342">GTP-binding</keyword>
<keyword id="KW-0378">Hydrolase</keyword>
<keyword id="KW-0460">Magnesium</keyword>
<keyword id="KW-0479">Metal-binding</keyword>
<keyword id="KW-0547">Nucleotide-binding</keyword>
<keyword id="KW-0630">Potassium</keyword>
<keyword id="KW-0819">tRNA processing</keyword>
<comment type="function">
    <text evidence="1">Exhibits a very high intrinsic GTPase hydrolysis rate. Involved in the addition of a carboxymethylaminomethyl (cmnm) group at the wobble position (U34) of certain tRNAs, forming tRNA-cmnm(5)s(2)U34.</text>
</comment>
<comment type="cofactor">
    <cofactor evidence="1">
        <name>K(+)</name>
        <dbReference type="ChEBI" id="CHEBI:29103"/>
    </cofactor>
    <text evidence="1">Binds 1 potassium ion per subunit.</text>
</comment>
<comment type="subunit">
    <text evidence="1">Homodimer. Heterotetramer of two MnmE and two MnmG subunits.</text>
</comment>
<comment type="subcellular location">
    <subcellularLocation>
        <location evidence="1">Cytoplasm</location>
    </subcellularLocation>
</comment>
<comment type="similarity">
    <text evidence="1">Belongs to the TRAFAC class TrmE-Era-EngA-EngB-Septin-like GTPase superfamily. TrmE GTPase family.</text>
</comment>
<feature type="chain" id="PRO_1000197052" description="tRNA modification GTPase MnmE">
    <location>
        <begin position="1"/>
        <end position="454"/>
    </location>
</feature>
<feature type="domain" description="TrmE-type G">
    <location>
        <begin position="216"/>
        <end position="377"/>
    </location>
</feature>
<feature type="binding site" evidence="1">
    <location>
        <position position="23"/>
    </location>
    <ligand>
        <name>(6S)-5-formyl-5,6,7,8-tetrahydrofolate</name>
        <dbReference type="ChEBI" id="CHEBI:57457"/>
    </ligand>
</feature>
<feature type="binding site" evidence="1">
    <location>
        <position position="80"/>
    </location>
    <ligand>
        <name>(6S)-5-formyl-5,6,7,8-tetrahydrofolate</name>
        <dbReference type="ChEBI" id="CHEBI:57457"/>
    </ligand>
</feature>
<feature type="binding site" evidence="1">
    <location>
        <position position="120"/>
    </location>
    <ligand>
        <name>(6S)-5-formyl-5,6,7,8-tetrahydrofolate</name>
        <dbReference type="ChEBI" id="CHEBI:57457"/>
    </ligand>
</feature>
<feature type="binding site" evidence="1">
    <location>
        <begin position="226"/>
        <end position="231"/>
    </location>
    <ligand>
        <name>GTP</name>
        <dbReference type="ChEBI" id="CHEBI:37565"/>
    </ligand>
</feature>
<feature type="binding site" evidence="1">
    <location>
        <position position="226"/>
    </location>
    <ligand>
        <name>K(+)</name>
        <dbReference type="ChEBI" id="CHEBI:29103"/>
    </ligand>
</feature>
<feature type="binding site" evidence="1">
    <location>
        <position position="230"/>
    </location>
    <ligand>
        <name>Mg(2+)</name>
        <dbReference type="ChEBI" id="CHEBI:18420"/>
    </ligand>
</feature>
<feature type="binding site" evidence="1">
    <location>
        <begin position="245"/>
        <end position="251"/>
    </location>
    <ligand>
        <name>GTP</name>
        <dbReference type="ChEBI" id="CHEBI:37565"/>
    </ligand>
</feature>
<feature type="binding site" evidence="1">
    <location>
        <position position="245"/>
    </location>
    <ligand>
        <name>K(+)</name>
        <dbReference type="ChEBI" id="CHEBI:29103"/>
    </ligand>
</feature>
<feature type="binding site" evidence="1">
    <location>
        <position position="247"/>
    </location>
    <ligand>
        <name>K(+)</name>
        <dbReference type="ChEBI" id="CHEBI:29103"/>
    </ligand>
</feature>
<feature type="binding site" evidence="1">
    <location>
        <position position="250"/>
    </location>
    <ligand>
        <name>K(+)</name>
        <dbReference type="ChEBI" id="CHEBI:29103"/>
    </ligand>
</feature>
<feature type="binding site" evidence="1">
    <location>
        <position position="251"/>
    </location>
    <ligand>
        <name>Mg(2+)</name>
        <dbReference type="ChEBI" id="CHEBI:18420"/>
    </ligand>
</feature>
<feature type="binding site" evidence="1">
    <location>
        <begin position="270"/>
        <end position="273"/>
    </location>
    <ligand>
        <name>GTP</name>
        <dbReference type="ChEBI" id="CHEBI:37565"/>
    </ligand>
</feature>
<feature type="binding site" evidence="1">
    <location>
        <begin position="335"/>
        <end position="338"/>
    </location>
    <ligand>
        <name>GTP</name>
        <dbReference type="ChEBI" id="CHEBI:37565"/>
    </ligand>
</feature>
<feature type="binding site" evidence="1">
    <location>
        <begin position="358"/>
        <end position="360"/>
    </location>
    <ligand>
        <name>GTP</name>
        <dbReference type="ChEBI" id="CHEBI:37565"/>
    </ligand>
</feature>
<feature type="binding site" evidence="1">
    <location>
        <position position="454"/>
    </location>
    <ligand>
        <name>(6S)-5-formyl-5,6,7,8-tetrahydrofolate</name>
        <dbReference type="ChEBI" id="CHEBI:57457"/>
    </ligand>
</feature>
<organism>
    <name type="scientific">Escherichia coli O81 (strain ED1a)</name>
    <dbReference type="NCBI Taxonomy" id="585397"/>
    <lineage>
        <taxon>Bacteria</taxon>
        <taxon>Pseudomonadati</taxon>
        <taxon>Pseudomonadota</taxon>
        <taxon>Gammaproteobacteria</taxon>
        <taxon>Enterobacterales</taxon>
        <taxon>Enterobacteriaceae</taxon>
        <taxon>Escherichia</taxon>
    </lineage>
</organism>
<accession>B7N211</accession>
<evidence type="ECO:0000255" key="1">
    <source>
        <dbReference type="HAMAP-Rule" id="MF_00379"/>
    </source>
</evidence>
<gene>
    <name evidence="1" type="primary">mnmE</name>
    <name evidence="1" type="synonym">trmE</name>
    <name type="ordered locus">ECED1_4398</name>
</gene>
<dbReference type="EC" id="3.6.-.-" evidence="1"/>
<dbReference type="EMBL" id="CU928162">
    <property type="protein sequence ID" value="CAR10382.1"/>
    <property type="molecule type" value="Genomic_DNA"/>
</dbReference>
<dbReference type="RefSeq" id="WP_001282361.1">
    <property type="nucleotide sequence ID" value="NC_011745.1"/>
</dbReference>
<dbReference type="SMR" id="B7N211"/>
<dbReference type="GeneID" id="86948644"/>
<dbReference type="KEGG" id="ecq:ECED1_4398"/>
<dbReference type="HOGENOM" id="CLU_019624_4_1_6"/>
<dbReference type="Proteomes" id="UP000000748">
    <property type="component" value="Chromosome"/>
</dbReference>
<dbReference type="GO" id="GO:0005829">
    <property type="term" value="C:cytosol"/>
    <property type="evidence" value="ECO:0007669"/>
    <property type="project" value="TreeGrafter"/>
</dbReference>
<dbReference type="GO" id="GO:0005525">
    <property type="term" value="F:GTP binding"/>
    <property type="evidence" value="ECO:0007669"/>
    <property type="project" value="UniProtKB-UniRule"/>
</dbReference>
<dbReference type="GO" id="GO:0003924">
    <property type="term" value="F:GTPase activity"/>
    <property type="evidence" value="ECO:0007669"/>
    <property type="project" value="UniProtKB-UniRule"/>
</dbReference>
<dbReference type="GO" id="GO:0046872">
    <property type="term" value="F:metal ion binding"/>
    <property type="evidence" value="ECO:0007669"/>
    <property type="project" value="UniProtKB-KW"/>
</dbReference>
<dbReference type="GO" id="GO:0030488">
    <property type="term" value="P:tRNA methylation"/>
    <property type="evidence" value="ECO:0007669"/>
    <property type="project" value="TreeGrafter"/>
</dbReference>
<dbReference type="GO" id="GO:0002098">
    <property type="term" value="P:tRNA wobble uridine modification"/>
    <property type="evidence" value="ECO:0007669"/>
    <property type="project" value="TreeGrafter"/>
</dbReference>
<dbReference type="CDD" id="cd04164">
    <property type="entry name" value="trmE"/>
    <property type="match status" value="1"/>
</dbReference>
<dbReference type="CDD" id="cd14858">
    <property type="entry name" value="TrmE_N"/>
    <property type="match status" value="1"/>
</dbReference>
<dbReference type="FunFam" id="3.30.1360.120:FF:000001">
    <property type="entry name" value="tRNA modification GTPase MnmE"/>
    <property type="match status" value="1"/>
</dbReference>
<dbReference type="FunFam" id="3.40.50.300:FF:000249">
    <property type="entry name" value="tRNA modification GTPase MnmE"/>
    <property type="match status" value="1"/>
</dbReference>
<dbReference type="Gene3D" id="3.40.50.300">
    <property type="entry name" value="P-loop containing nucleotide triphosphate hydrolases"/>
    <property type="match status" value="1"/>
</dbReference>
<dbReference type="Gene3D" id="3.30.1360.120">
    <property type="entry name" value="Probable tRNA modification gtpase trme, domain 1"/>
    <property type="match status" value="1"/>
</dbReference>
<dbReference type="Gene3D" id="1.20.120.430">
    <property type="entry name" value="tRNA modification GTPase MnmE domain 2"/>
    <property type="match status" value="1"/>
</dbReference>
<dbReference type="HAMAP" id="MF_00379">
    <property type="entry name" value="GTPase_MnmE"/>
    <property type="match status" value="1"/>
</dbReference>
<dbReference type="InterPro" id="IPR031168">
    <property type="entry name" value="G_TrmE"/>
</dbReference>
<dbReference type="InterPro" id="IPR006073">
    <property type="entry name" value="GTP-bd"/>
</dbReference>
<dbReference type="InterPro" id="IPR018948">
    <property type="entry name" value="GTP-bd_TrmE_N"/>
</dbReference>
<dbReference type="InterPro" id="IPR004520">
    <property type="entry name" value="GTPase_MnmE"/>
</dbReference>
<dbReference type="InterPro" id="IPR027368">
    <property type="entry name" value="MnmE_dom2"/>
</dbReference>
<dbReference type="InterPro" id="IPR025867">
    <property type="entry name" value="MnmE_helical"/>
</dbReference>
<dbReference type="InterPro" id="IPR027417">
    <property type="entry name" value="P-loop_NTPase"/>
</dbReference>
<dbReference type="InterPro" id="IPR005225">
    <property type="entry name" value="Small_GTP-bd"/>
</dbReference>
<dbReference type="InterPro" id="IPR027266">
    <property type="entry name" value="TrmE/GcvT_dom1"/>
</dbReference>
<dbReference type="NCBIfam" id="TIGR00450">
    <property type="entry name" value="mnmE_trmE_thdF"/>
    <property type="match status" value="1"/>
</dbReference>
<dbReference type="NCBIfam" id="NF003661">
    <property type="entry name" value="PRK05291.1-3"/>
    <property type="match status" value="1"/>
</dbReference>
<dbReference type="NCBIfam" id="TIGR00231">
    <property type="entry name" value="small_GTP"/>
    <property type="match status" value="1"/>
</dbReference>
<dbReference type="PANTHER" id="PTHR42714">
    <property type="entry name" value="TRNA MODIFICATION GTPASE GTPBP3"/>
    <property type="match status" value="1"/>
</dbReference>
<dbReference type="PANTHER" id="PTHR42714:SF2">
    <property type="entry name" value="TRNA MODIFICATION GTPASE GTPBP3, MITOCHONDRIAL"/>
    <property type="match status" value="1"/>
</dbReference>
<dbReference type="Pfam" id="PF01926">
    <property type="entry name" value="MMR_HSR1"/>
    <property type="match status" value="1"/>
</dbReference>
<dbReference type="Pfam" id="PF12631">
    <property type="entry name" value="MnmE_helical"/>
    <property type="match status" value="1"/>
</dbReference>
<dbReference type="Pfam" id="PF10396">
    <property type="entry name" value="TrmE_N"/>
    <property type="match status" value="1"/>
</dbReference>
<dbReference type="SUPFAM" id="SSF52540">
    <property type="entry name" value="P-loop containing nucleoside triphosphate hydrolases"/>
    <property type="match status" value="1"/>
</dbReference>
<dbReference type="SUPFAM" id="SSF116878">
    <property type="entry name" value="TrmE connector domain"/>
    <property type="match status" value="1"/>
</dbReference>
<dbReference type="PROSITE" id="PS51709">
    <property type="entry name" value="G_TRME"/>
    <property type="match status" value="1"/>
</dbReference>
<name>MNME_ECO81</name>